<sequence>MERVRIFDTTLRDGEQSPGVSLNAMEKLQIARQLQKLGVDVIEAGFPITSPGDKEAVSLIAREVKGVVVAALARASALDIETAWDAIKDAESPRIHTFIATSDIHLKYKLKMDRETVVERAVAAVKLAKKFTADVEFSAEDASRSDLDFLCRVVEAAVKAGATTINIPDTVGYAEPEEFGEFICKILEKVPVMDRAVLSVHCHDDLGLAVANSLAAIKNGARQVECTINGIGERAGNCSLEEIVMALYTRKDVLPFYTGIKTEEIYRTSKLVSNLTGMPVQPNKAIVGKNAFSHESGIHQDGVLKERTTYEIMNPRLVGIPESRLVLGKHSGRHALKERLLELGYELTEEQLNEAFVKFKALADKKKEVTDQDLEAMMEEEIRKVPETYTLDYFHISTGSTIIPTATVGLIKEGEKLEDAATGDGPVDAIYKAINKITGLTPVLEQYSINAVTSGEDALGEVVVKLKNGLGKIVTGRGVSTDILEASAKAYLNGINKLLFDYQAKGEKQ</sequence>
<name>LEU1_CARHZ</name>
<reference key="1">
    <citation type="journal article" date="2005" name="PLoS Genet.">
        <title>Life in hot carbon monoxide: the complete genome sequence of Carboxydothermus hydrogenoformans Z-2901.</title>
        <authorList>
            <person name="Wu M."/>
            <person name="Ren Q."/>
            <person name="Durkin A.S."/>
            <person name="Daugherty S.C."/>
            <person name="Brinkac L.M."/>
            <person name="Dodson R.J."/>
            <person name="Madupu R."/>
            <person name="Sullivan S.A."/>
            <person name="Kolonay J.F."/>
            <person name="Nelson W.C."/>
            <person name="Tallon L.J."/>
            <person name="Jones K.M."/>
            <person name="Ulrich L.E."/>
            <person name="Gonzalez J.M."/>
            <person name="Zhulin I.B."/>
            <person name="Robb F.T."/>
            <person name="Eisen J.A."/>
        </authorList>
    </citation>
    <scope>NUCLEOTIDE SEQUENCE [LARGE SCALE GENOMIC DNA]</scope>
    <source>
        <strain>ATCC BAA-161 / DSM 6008 / Z-2901</strain>
    </source>
</reference>
<evidence type="ECO:0000255" key="1">
    <source>
        <dbReference type="HAMAP-Rule" id="MF_01025"/>
    </source>
</evidence>
<feature type="chain" id="PRO_1000149165" description="2-isopropylmalate synthase">
    <location>
        <begin position="1"/>
        <end position="509"/>
    </location>
</feature>
<feature type="domain" description="Pyruvate carboxyltransferase" evidence="1">
    <location>
        <begin position="4"/>
        <end position="266"/>
    </location>
</feature>
<feature type="region of interest" description="Regulatory domain" evidence="1">
    <location>
        <begin position="390"/>
        <end position="509"/>
    </location>
</feature>
<feature type="binding site" evidence="1">
    <location>
        <position position="13"/>
    </location>
    <ligand>
        <name>Mn(2+)</name>
        <dbReference type="ChEBI" id="CHEBI:29035"/>
    </ligand>
</feature>
<feature type="binding site" evidence="1">
    <location>
        <position position="201"/>
    </location>
    <ligand>
        <name>Mn(2+)</name>
        <dbReference type="ChEBI" id="CHEBI:29035"/>
    </ligand>
</feature>
<feature type="binding site" evidence="1">
    <location>
        <position position="203"/>
    </location>
    <ligand>
        <name>Mn(2+)</name>
        <dbReference type="ChEBI" id="CHEBI:29035"/>
    </ligand>
</feature>
<feature type="binding site" evidence="1">
    <location>
        <position position="237"/>
    </location>
    <ligand>
        <name>Mn(2+)</name>
        <dbReference type="ChEBI" id="CHEBI:29035"/>
    </ligand>
</feature>
<keyword id="KW-0028">Amino-acid biosynthesis</keyword>
<keyword id="KW-0100">Branched-chain amino acid biosynthesis</keyword>
<keyword id="KW-0963">Cytoplasm</keyword>
<keyword id="KW-0432">Leucine biosynthesis</keyword>
<keyword id="KW-0464">Manganese</keyword>
<keyword id="KW-0479">Metal-binding</keyword>
<keyword id="KW-1185">Reference proteome</keyword>
<keyword id="KW-0808">Transferase</keyword>
<protein>
    <recommendedName>
        <fullName evidence="1">2-isopropylmalate synthase</fullName>
        <ecNumber evidence="1">2.3.3.13</ecNumber>
    </recommendedName>
    <alternativeName>
        <fullName evidence="1">Alpha-IPM synthase</fullName>
    </alternativeName>
    <alternativeName>
        <fullName evidence="1">Alpha-isopropylmalate synthase</fullName>
    </alternativeName>
</protein>
<gene>
    <name evidence="1" type="primary">leuA</name>
    <name type="ordered locus">CHY_0521</name>
</gene>
<comment type="function">
    <text evidence="1">Catalyzes the condensation of the acetyl group of acetyl-CoA with 3-methyl-2-oxobutanoate (2-ketoisovalerate) to form 3-carboxy-3-hydroxy-4-methylpentanoate (2-isopropylmalate).</text>
</comment>
<comment type="catalytic activity">
    <reaction evidence="1">
        <text>3-methyl-2-oxobutanoate + acetyl-CoA + H2O = (2S)-2-isopropylmalate + CoA + H(+)</text>
        <dbReference type="Rhea" id="RHEA:21524"/>
        <dbReference type="ChEBI" id="CHEBI:1178"/>
        <dbReference type="ChEBI" id="CHEBI:11851"/>
        <dbReference type="ChEBI" id="CHEBI:15377"/>
        <dbReference type="ChEBI" id="CHEBI:15378"/>
        <dbReference type="ChEBI" id="CHEBI:57287"/>
        <dbReference type="ChEBI" id="CHEBI:57288"/>
        <dbReference type="EC" id="2.3.3.13"/>
    </reaction>
</comment>
<comment type="cofactor">
    <cofactor evidence="1">
        <name>Mn(2+)</name>
        <dbReference type="ChEBI" id="CHEBI:29035"/>
    </cofactor>
</comment>
<comment type="pathway">
    <text evidence="1">Amino-acid biosynthesis; L-leucine biosynthesis; L-leucine from 3-methyl-2-oxobutanoate: step 1/4.</text>
</comment>
<comment type="subunit">
    <text evidence="1">Homodimer.</text>
</comment>
<comment type="subcellular location">
    <subcellularLocation>
        <location evidence="1">Cytoplasm</location>
    </subcellularLocation>
</comment>
<comment type="similarity">
    <text evidence="1">Belongs to the alpha-IPM synthase/homocitrate synthase family. LeuA type 1 subfamily.</text>
</comment>
<proteinExistence type="inferred from homology"/>
<organism>
    <name type="scientific">Carboxydothermus hydrogenoformans (strain ATCC BAA-161 / DSM 6008 / Z-2901)</name>
    <dbReference type="NCBI Taxonomy" id="246194"/>
    <lineage>
        <taxon>Bacteria</taxon>
        <taxon>Bacillati</taxon>
        <taxon>Bacillota</taxon>
        <taxon>Clostridia</taxon>
        <taxon>Thermoanaerobacterales</taxon>
        <taxon>Thermoanaerobacteraceae</taxon>
        <taxon>Carboxydothermus</taxon>
    </lineage>
</organism>
<accession>Q3AEQ5</accession>
<dbReference type="EC" id="2.3.3.13" evidence="1"/>
<dbReference type="EMBL" id="CP000141">
    <property type="protein sequence ID" value="ABB15265.1"/>
    <property type="molecule type" value="Genomic_DNA"/>
</dbReference>
<dbReference type="RefSeq" id="WP_011343455.1">
    <property type="nucleotide sequence ID" value="NC_007503.1"/>
</dbReference>
<dbReference type="SMR" id="Q3AEQ5"/>
<dbReference type="FunCoup" id="Q3AEQ5">
    <property type="interactions" value="328"/>
</dbReference>
<dbReference type="STRING" id="246194.CHY_0521"/>
<dbReference type="KEGG" id="chy:CHY_0521"/>
<dbReference type="eggNOG" id="COG0119">
    <property type="taxonomic scope" value="Bacteria"/>
</dbReference>
<dbReference type="HOGENOM" id="CLU_022158_0_1_9"/>
<dbReference type="InParanoid" id="Q3AEQ5"/>
<dbReference type="OrthoDB" id="9804858at2"/>
<dbReference type="UniPathway" id="UPA00048">
    <property type="reaction ID" value="UER00070"/>
</dbReference>
<dbReference type="Proteomes" id="UP000002706">
    <property type="component" value="Chromosome"/>
</dbReference>
<dbReference type="GO" id="GO:0005737">
    <property type="term" value="C:cytoplasm"/>
    <property type="evidence" value="ECO:0007669"/>
    <property type="project" value="UniProtKB-SubCell"/>
</dbReference>
<dbReference type="GO" id="GO:0003852">
    <property type="term" value="F:2-isopropylmalate synthase activity"/>
    <property type="evidence" value="ECO:0007669"/>
    <property type="project" value="UniProtKB-UniRule"/>
</dbReference>
<dbReference type="GO" id="GO:0003985">
    <property type="term" value="F:acetyl-CoA C-acetyltransferase activity"/>
    <property type="evidence" value="ECO:0007669"/>
    <property type="project" value="UniProtKB-UniRule"/>
</dbReference>
<dbReference type="GO" id="GO:0030145">
    <property type="term" value="F:manganese ion binding"/>
    <property type="evidence" value="ECO:0007669"/>
    <property type="project" value="UniProtKB-UniRule"/>
</dbReference>
<dbReference type="GO" id="GO:0009098">
    <property type="term" value="P:L-leucine biosynthetic process"/>
    <property type="evidence" value="ECO:0007669"/>
    <property type="project" value="UniProtKB-UniRule"/>
</dbReference>
<dbReference type="CDD" id="cd07940">
    <property type="entry name" value="DRE_TIM_IPMS"/>
    <property type="match status" value="1"/>
</dbReference>
<dbReference type="FunFam" id="1.10.238.260:FF:000001">
    <property type="entry name" value="2-isopropylmalate synthase"/>
    <property type="match status" value="1"/>
</dbReference>
<dbReference type="FunFam" id="3.20.20.70:FF:000010">
    <property type="entry name" value="2-isopropylmalate synthase"/>
    <property type="match status" value="1"/>
</dbReference>
<dbReference type="FunFam" id="3.30.160.270:FF:000001">
    <property type="entry name" value="2-isopropylmalate synthase"/>
    <property type="match status" value="1"/>
</dbReference>
<dbReference type="Gene3D" id="1.10.238.260">
    <property type="match status" value="1"/>
</dbReference>
<dbReference type="Gene3D" id="3.30.160.270">
    <property type="match status" value="1"/>
</dbReference>
<dbReference type="Gene3D" id="3.20.20.70">
    <property type="entry name" value="Aldolase class I"/>
    <property type="match status" value="1"/>
</dbReference>
<dbReference type="HAMAP" id="MF_01025">
    <property type="entry name" value="LeuA_type1"/>
    <property type="match status" value="1"/>
</dbReference>
<dbReference type="InterPro" id="IPR050073">
    <property type="entry name" value="2-IPM_HCS-like"/>
</dbReference>
<dbReference type="InterPro" id="IPR013709">
    <property type="entry name" value="2-isopropylmalate_synth_dimer"/>
</dbReference>
<dbReference type="InterPro" id="IPR002034">
    <property type="entry name" value="AIPM/Hcit_synth_CS"/>
</dbReference>
<dbReference type="InterPro" id="IPR013785">
    <property type="entry name" value="Aldolase_TIM"/>
</dbReference>
<dbReference type="InterPro" id="IPR054691">
    <property type="entry name" value="LeuA/HCS_post-cat"/>
</dbReference>
<dbReference type="InterPro" id="IPR036230">
    <property type="entry name" value="LeuA_allosteric_dom_sf"/>
</dbReference>
<dbReference type="InterPro" id="IPR005671">
    <property type="entry name" value="LeuA_bact_synth"/>
</dbReference>
<dbReference type="InterPro" id="IPR000891">
    <property type="entry name" value="PYR_CT"/>
</dbReference>
<dbReference type="NCBIfam" id="TIGR00973">
    <property type="entry name" value="leuA_bact"/>
    <property type="match status" value="1"/>
</dbReference>
<dbReference type="NCBIfam" id="NF002085">
    <property type="entry name" value="PRK00915.1-2"/>
    <property type="match status" value="1"/>
</dbReference>
<dbReference type="NCBIfam" id="NF002086">
    <property type="entry name" value="PRK00915.1-3"/>
    <property type="match status" value="1"/>
</dbReference>
<dbReference type="NCBIfam" id="NF002087">
    <property type="entry name" value="PRK00915.1-4"/>
    <property type="match status" value="1"/>
</dbReference>
<dbReference type="NCBIfam" id="NF002088">
    <property type="entry name" value="PRK00915.1-5"/>
    <property type="match status" value="1"/>
</dbReference>
<dbReference type="PANTHER" id="PTHR10277:SF9">
    <property type="entry name" value="2-ISOPROPYLMALATE SYNTHASE 1, CHLOROPLASTIC-RELATED"/>
    <property type="match status" value="1"/>
</dbReference>
<dbReference type="PANTHER" id="PTHR10277">
    <property type="entry name" value="HOMOCITRATE SYNTHASE-RELATED"/>
    <property type="match status" value="1"/>
</dbReference>
<dbReference type="Pfam" id="PF22617">
    <property type="entry name" value="HCS_D2"/>
    <property type="match status" value="1"/>
</dbReference>
<dbReference type="Pfam" id="PF00682">
    <property type="entry name" value="HMGL-like"/>
    <property type="match status" value="1"/>
</dbReference>
<dbReference type="Pfam" id="PF08502">
    <property type="entry name" value="LeuA_dimer"/>
    <property type="match status" value="1"/>
</dbReference>
<dbReference type="SMART" id="SM00917">
    <property type="entry name" value="LeuA_dimer"/>
    <property type="match status" value="1"/>
</dbReference>
<dbReference type="SUPFAM" id="SSF110921">
    <property type="entry name" value="2-isopropylmalate synthase LeuA, allosteric (dimerisation) domain"/>
    <property type="match status" value="1"/>
</dbReference>
<dbReference type="SUPFAM" id="SSF51569">
    <property type="entry name" value="Aldolase"/>
    <property type="match status" value="1"/>
</dbReference>
<dbReference type="PROSITE" id="PS00815">
    <property type="entry name" value="AIPM_HOMOCIT_SYNTH_1"/>
    <property type="match status" value="1"/>
</dbReference>
<dbReference type="PROSITE" id="PS00816">
    <property type="entry name" value="AIPM_HOMOCIT_SYNTH_2"/>
    <property type="match status" value="1"/>
</dbReference>
<dbReference type="PROSITE" id="PS50991">
    <property type="entry name" value="PYR_CT"/>
    <property type="match status" value="1"/>
</dbReference>